<dbReference type="EMBL" id="AE016825">
    <property type="protein sequence ID" value="AAQ61356.1"/>
    <property type="molecule type" value="Genomic_DNA"/>
</dbReference>
<dbReference type="SMR" id="Q7NRT6"/>
<dbReference type="STRING" id="243365.CV_3694"/>
<dbReference type="KEGG" id="cvi:CV_3694"/>
<dbReference type="eggNOG" id="COG0316">
    <property type="taxonomic scope" value="Bacteria"/>
</dbReference>
<dbReference type="HOGENOM" id="CLU_069054_5_3_4"/>
<dbReference type="OrthoDB" id="9801228at2"/>
<dbReference type="Proteomes" id="UP000001424">
    <property type="component" value="Chromosome"/>
</dbReference>
<dbReference type="GO" id="GO:0051537">
    <property type="term" value="F:2 iron, 2 sulfur cluster binding"/>
    <property type="evidence" value="ECO:0007669"/>
    <property type="project" value="TreeGrafter"/>
</dbReference>
<dbReference type="GO" id="GO:0051539">
    <property type="term" value="F:4 iron, 4 sulfur cluster binding"/>
    <property type="evidence" value="ECO:0007669"/>
    <property type="project" value="TreeGrafter"/>
</dbReference>
<dbReference type="GO" id="GO:0005506">
    <property type="term" value="F:iron ion binding"/>
    <property type="evidence" value="ECO:0007669"/>
    <property type="project" value="UniProtKB-UniRule"/>
</dbReference>
<dbReference type="GO" id="GO:0016226">
    <property type="term" value="P:iron-sulfur cluster assembly"/>
    <property type="evidence" value="ECO:0007669"/>
    <property type="project" value="UniProtKB-UniRule"/>
</dbReference>
<dbReference type="FunFam" id="2.60.300.12:FF:000002">
    <property type="entry name" value="Iron-sulfur cluster insertion protein ErpA"/>
    <property type="match status" value="1"/>
</dbReference>
<dbReference type="Gene3D" id="2.60.300.12">
    <property type="entry name" value="HesB-like domain"/>
    <property type="match status" value="1"/>
</dbReference>
<dbReference type="HAMAP" id="MF_01380">
    <property type="entry name" value="Fe_S_insert_ErpA"/>
    <property type="match status" value="1"/>
</dbReference>
<dbReference type="InterPro" id="IPR000361">
    <property type="entry name" value="FeS_biogenesis"/>
</dbReference>
<dbReference type="InterPro" id="IPR016092">
    <property type="entry name" value="FeS_cluster_insertion"/>
</dbReference>
<dbReference type="InterPro" id="IPR017870">
    <property type="entry name" value="FeS_cluster_insertion_CS"/>
</dbReference>
<dbReference type="InterPro" id="IPR023063">
    <property type="entry name" value="FeS_cluster_insertion_RrpA"/>
</dbReference>
<dbReference type="InterPro" id="IPR035903">
    <property type="entry name" value="HesB-like_dom_sf"/>
</dbReference>
<dbReference type="NCBIfam" id="TIGR00049">
    <property type="entry name" value="iron-sulfur cluster assembly accessory protein"/>
    <property type="match status" value="1"/>
</dbReference>
<dbReference type="NCBIfam" id="NF010147">
    <property type="entry name" value="PRK13623.1"/>
    <property type="match status" value="1"/>
</dbReference>
<dbReference type="PANTHER" id="PTHR43011">
    <property type="entry name" value="IRON-SULFUR CLUSTER ASSEMBLY 2 HOMOLOG, MITOCHONDRIAL"/>
    <property type="match status" value="1"/>
</dbReference>
<dbReference type="PANTHER" id="PTHR43011:SF1">
    <property type="entry name" value="IRON-SULFUR CLUSTER ASSEMBLY 2 HOMOLOG, MITOCHONDRIAL"/>
    <property type="match status" value="1"/>
</dbReference>
<dbReference type="Pfam" id="PF01521">
    <property type="entry name" value="Fe-S_biosyn"/>
    <property type="match status" value="1"/>
</dbReference>
<dbReference type="SUPFAM" id="SSF89360">
    <property type="entry name" value="HesB-like domain"/>
    <property type="match status" value="1"/>
</dbReference>
<dbReference type="PROSITE" id="PS01152">
    <property type="entry name" value="HESB"/>
    <property type="match status" value="1"/>
</dbReference>
<protein>
    <recommendedName>
        <fullName evidence="1">Putative iron-sulfur cluster insertion protein ErpA</fullName>
    </recommendedName>
</protein>
<proteinExistence type="inferred from homology"/>
<name>ERPA_CHRVO</name>
<reference key="1">
    <citation type="journal article" date="2003" name="Proc. Natl. Acad. Sci. U.S.A.">
        <title>The complete genome sequence of Chromobacterium violaceum reveals remarkable and exploitable bacterial adaptability.</title>
        <authorList>
            <person name="Vasconcelos A.T.R."/>
            <person name="de Almeida D.F."/>
            <person name="Hungria M."/>
            <person name="Guimaraes C.T."/>
            <person name="Antonio R.V."/>
            <person name="Almeida F.C."/>
            <person name="de Almeida L.G.P."/>
            <person name="de Almeida R."/>
            <person name="Alves-Gomes J.A."/>
            <person name="Andrade E.M."/>
            <person name="Araripe J."/>
            <person name="de Araujo M.F.F."/>
            <person name="Astolfi-Filho S."/>
            <person name="Azevedo V."/>
            <person name="Baptista A.J."/>
            <person name="Bataus L.A.M."/>
            <person name="Batista J.S."/>
            <person name="Belo A."/>
            <person name="van den Berg C."/>
            <person name="Bogo M."/>
            <person name="Bonatto S."/>
            <person name="Bordignon J."/>
            <person name="Brigido M.M."/>
            <person name="Brito C.A."/>
            <person name="Brocchi M."/>
            <person name="Burity H.A."/>
            <person name="Camargo A.A."/>
            <person name="Cardoso D.D.P."/>
            <person name="Carneiro N.P."/>
            <person name="Carraro D.M."/>
            <person name="Carvalho C.M.B."/>
            <person name="Cascardo J.C.M."/>
            <person name="Cavada B.S."/>
            <person name="Chueire L.M.O."/>
            <person name="Creczynski-Pasa T.B."/>
            <person name="Cunha-Junior N.C."/>
            <person name="Fagundes N."/>
            <person name="Falcao C.L."/>
            <person name="Fantinatti F."/>
            <person name="Farias I.P."/>
            <person name="Felipe M.S.S."/>
            <person name="Ferrari L.P."/>
            <person name="Ferro J.A."/>
            <person name="Ferro M.I.T."/>
            <person name="Franco G.R."/>
            <person name="Freitas N.S.A."/>
            <person name="Furlan L.R."/>
            <person name="Gazzinelli R.T."/>
            <person name="Gomes E.A."/>
            <person name="Goncalves P.R."/>
            <person name="Grangeiro T.B."/>
            <person name="Grattapaglia D."/>
            <person name="Grisard E.C."/>
            <person name="Hanna E.S."/>
            <person name="Jardim S.N."/>
            <person name="Laurino J."/>
            <person name="Leoi L.C.T."/>
            <person name="Lima L.F.A."/>
            <person name="Loureiro M.F."/>
            <person name="Lyra M.C.C.P."/>
            <person name="Madeira H.M.F."/>
            <person name="Manfio G.P."/>
            <person name="Maranhao A.Q."/>
            <person name="Martins W.S."/>
            <person name="di Mauro S.M.Z."/>
            <person name="de Medeiros S.R.B."/>
            <person name="Meissner R.V."/>
            <person name="Moreira M.A.M."/>
            <person name="Nascimento F.F."/>
            <person name="Nicolas M.F."/>
            <person name="Oliveira J.G."/>
            <person name="Oliveira S.C."/>
            <person name="Paixao R.F.C."/>
            <person name="Parente J.A."/>
            <person name="Pedrosa F.O."/>
            <person name="Pena S.D.J."/>
            <person name="Pereira J.O."/>
            <person name="Pereira M."/>
            <person name="Pinto L.S.R.C."/>
            <person name="Pinto L.S."/>
            <person name="Porto J.I.R."/>
            <person name="Potrich D.P."/>
            <person name="Ramalho-Neto C.E."/>
            <person name="Reis A.M.M."/>
            <person name="Rigo L.U."/>
            <person name="Rondinelli E."/>
            <person name="Santos E.B.P."/>
            <person name="Santos F.R."/>
            <person name="Schneider M.P.C."/>
            <person name="Seuanez H.N."/>
            <person name="Silva A.M.R."/>
            <person name="da Silva A.L.C."/>
            <person name="Silva D.W."/>
            <person name="Silva R."/>
            <person name="Simoes I.C."/>
            <person name="Simon D."/>
            <person name="Soares C.M.A."/>
            <person name="Soares R.B.A."/>
            <person name="Souza E.M."/>
            <person name="Souza K.R.L."/>
            <person name="Souza R.C."/>
            <person name="Steffens M.B.R."/>
            <person name="Steindel M."/>
            <person name="Teixeira S.R."/>
            <person name="Urmenyi T."/>
            <person name="Vettore A."/>
            <person name="Wassem R."/>
            <person name="Zaha A."/>
            <person name="Simpson A.J.G."/>
        </authorList>
    </citation>
    <scope>NUCLEOTIDE SEQUENCE [LARGE SCALE GENOMIC DNA]</scope>
    <source>
        <strain>ATCC 12472 / DSM 30191 / JCM 1249 / CCUG 213 / NBRC 12614 / NCIMB 9131 / NCTC 9757 / MK</strain>
    </source>
</reference>
<organism>
    <name type="scientific">Chromobacterium violaceum (strain ATCC 12472 / DSM 30191 / JCM 1249 / CCUG 213 / NBRC 12614 / NCIMB 9131 / NCTC 9757 / MK)</name>
    <dbReference type="NCBI Taxonomy" id="243365"/>
    <lineage>
        <taxon>Bacteria</taxon>
        <taxon>Pseudomonadati</taxon>
        <taxon>Pseudomonadota</taxon>
        <taxon>Betaproteobacteria</taxon>
        <taxon>Neisseriales</taxon>
        <taxon>Chromobacteriaceae</taxon>
        <taxon>Chromobacterium</taxon>
    </lineage>
</organism>
<feature type="chain" id="PRO_0000311471" description="Putative iron-sulfur cluster insertion protein ErpA">
    <location>
        <begin position="1"/>
        <end position="117"/>
    </location>
</feature>
<feature type="binding site" evidence="1">
    <location>
        <position position="45"/>
    </location>
    <ligand>
        <name>iron-sulfur cluster</name>
        <dbReference type="ChEBI" id="CHEBI:30408"/>
    </ligand>
</feature>
<feature type="binding site" evidence="1">
    <location>
        <position position="109"/>
    </location>
    <ligand>
        <name>iron-sulfur cluster</name>
        <dbReference type="ChEBI" id="CHEBI:30408"/>
    </ligand>
</feature>
<feature type="binding site" evidence="1">
    <location>
        <position position="111"/>
    </location>
    <ligand>
        <name>iron-sulfur cluster</name>
        <dbReference type="ChEBI" id="CHEBI:30408"/>
    </ligand>
</feature>
<sequence>MTEAATEMPSPINFTESACAKVQDLIAEEGNPDLKLRVFVTGGGCSGFQYGFTFDEIANEDDTAIERQGVTFLVDPMSYQYLVGAEIDYQESLEGSQFVIRNPNATTTCGCGSSFSV</sequence>
<comment type="function">
    <text evidence="1">Required for insertion of 4Fe-4S clusters.</text>
</comment>
<comment type="cofactor">
    <cofactor evidence="1">
        <name>iron-sulfur cluster</name>
        <dbReference type="ChEBI" id="CHEBI:30408"/>
    </cofactor>
    <text evidence="1">Binds 1 iron-sulfur cluster per subunit.</text>
</comment>
<comment type="subunit">
    <text evidence="1">Homodimer.</text>
</comment>
<comment type="similarity">
    <text evidence="1">Belongs to the HesB/IscA family.</text>
</comment>
<evidence type="ECO:0000255" key="1">
    <source>
        <dbReference type="HAMAP-Rule" id="MF_01380"/>
    </source>
</evidence>
<keyword id="KW-0408">Iron</keyword>
<keyword id="KW-0411">Iron-sulfur</keyword>
<keyword id="KW-0479">Metal-binding</keyword>
<keyword id="KW-1185">Reference proteome</keyword>
<accession>Q7NRT6</accession>
<gene>
    <name evidence="1" type="primary">erpA</name>
    <name type="ordered locus">CV_3694</name>
</gene>